<protein>
    <recommendedName>
        <fullName evidence="4 5">U3-myrmicitoxin-Tb1a</fullName>
        <shortName evidence="4 5">U3-MYRTX-Tb1a</shortName>
    </recommendedName>
</protein>
<accession>A0A6M3Z4R1</accession>
<dbReference type="EMBL" id="MN397945">
    <property type="protein sequence ID" value="QJP03492.1"/>
    <property type="molecule type" value="mRNA"/>
</dbReference>
<dbReference type="SMR" id="A0A6M3Z4R1"/>
<dbReference type="GO" id="GO:0005576">
    <property type="term" value="C:extracellular region"/>
    <property type="evidence" value="ECO:0000314"/>
    <property type="project" value="UniProtKB"/>
</dbReference>
<dbReference type="GO" id="GO:0017080">
    <property type="term" value="F:sodium channel regulator activity"/>
    <property type="evidence" value="ECO:0007669"/>
    <property type="project" value="UniProtKB-KW"/>
</dbReference>
<dbReference type="GO" id="GO:0090729">
    <property type="term" value="F:toxin activity"/>
    <property type="evidence" value="ECO:0007669"/>
    <property type="project" value="UniProtKB-KW"/>
</dbReference>
<feature type="signal peptide" evidence="2">
    <location>
        <begin position="1"/>
        <end position="23"/>
    </location>
</feature>
<feature type="propeptide" id="PRO_0000459813" evidence="6">
    <location>
        <begin position="24"/>
        <end position="49"/>
    </location>
</feature>
<feature type="peptide" id="PRO_5027047428" description="U3-myrmicitoxin-Tb1a" evidence="3">
    <location>
        <begin position="50"/>
        <end position="72"/>
    </location>
</feature>
<feature type="modified residue" description="Asparagine amide" evidence="3">
    <location>
        <position position="72"/>
    </location>
</feature>
<keyword id="KW-0027">Amidation</keyword>
<keyword id="KW-0903">Direct protein sequencing</keyword>
<keyword id="KW-0872">Ion channel impairing toxin</keyword>
<keyword id="KW-0528">Neurotoxin</keyword>
<keyword id="KW-0964">Secreted</keyword>
<keyword id="KW-0732">Signal</keyword>
<keyword id="KW-0800">Toxin</keyword>
<keyword id="KW-0738">Voltage-gated sodium channel impairing toxin</keyword>
<name>TX3A_TETBN</name>
<comment type="function">
    <text evidence="1">Vertebrate selective toxin that causes pain by targeting tetrodotoxin (TTX)-sensitive sodium channels in peripheral sensory neurons. Converts the normally rapidly activating and inactivating sodium channel current into one that does not inactivate. Is active on both Nav1.6/SCN8A and Nav1.7/SCN9A, with a much potent activity on Nav1.6/SCN8A (EC(50)=196 nM on human channels) than on Nav1.7/SCN9A (EC(50)=1.9 uM on human and EC(50)=1.2 uM on mouse channels). On these channels, causes a sustained current, an increase in peak current amplitude and a hyperpolarising shift in the voltage-dependence of channel activation. Toxin-induced hNav1.6/SCN8A and hNav1.7/SCN9A persistent currents are slowly reversible with repeated wash steps over 30 minutes. In vivo, intraplantar injection into mice causes dose-dependent spontaneous nocifensive behaviors which are gradual in onset, reaching near maximal at 30 minutes post-injection. These nocifensive behaviors decrease with coinjection of TTX. When tested on insects, intrathoracic injection into blowflies (Lucilia caesar) does not cause paralysis or death (up to a dose of 200 nmol/g).</text>
</comment>
<comment type="subcellular location">
    <subcellularLocation>
        <location evidence="3">Secreted</location>
    </subcellularLocation>
</comment>
<comment type="tissue specificity">
    <text evidence="3">Expressed by the venom gland.</text>
</comment>
<comment type="mass spectrometry"/>
<comment type="online information" name="Biological Magnetic Resonance Data Bank">
    <link uri="https://bmrb.io/data_library/summary/index.php?bmrbId=21099"/>
</comment>
<proteinExistence type="evidence at protein level"/>
<reference evidence="7" key="1">
    <citation type="journal article" date="2018" name="J. Proteome Res.">
        <title>Deciphering the Molecular Diversity of an Ant Venom Peptidome through a Venomics Approach.</title>
        <authorList>
            <person name="Touchard A."/>
            <person name="Tene N."/>
            <person name="Song P.C.T."/>
            <person name="Lefranc B."/>
            <person name="Leprince J."/>
            <person name="Treilhou M."/>
            <person name="Bonnafe E."/>
        </authorList>
    </citation>
    <scope>NUCLEOTIDE SEQUENCE [MRNA]</scope>
    <scope>PROTEIN SEQUENCE OF 50-72</scope>
    <scope>MASS SPECTROMETRY</scope>
    <scope>AMIDATION AT ASN-72</scope>
    <scope>SUBCELLULAR LOCATION</scope>
    <source>
        <tissue>Venom</tissue>
        <tissue>Venom gland</tissue>
    </source>
</reference>
<reference key="2">
    <citation type="journal article" date="2022" name="Insect Biochem. Mol. Biol.">
        <title>Venomics survey of six myrmicine ants provides insights into the molecular and structural diversity of their peptide toxins.</title>
        <authorList>
            <person name="Barasse V."/>
            <person name="Tene N."/>
            <person name="Klopp C."/>
            <person name="Paquet F."/>
            <person name="Tysklind N."/>
            <person name="Troispoux V."/>
            <person name="Lalaegue H."/>
            <person name="Orivel J."/>
            <person name="Lefranc B."/>
            <person name="Leprince J."/>
            <person name="Kenne M."/>
            <person name="Tindo M."/>
            <person name="Treilhou M."/>
            <person name="Touchard A."/>
            <person name="Bonnafe E."/>
        </authorList>
    </citation>
    <scope>STRUCTURE BY NMR OF 50-72</scope>
    <scope>SYNTHESIS OF 50-72</scope>
</reference>
<evidence type="ECO:0000250" key="1">
    <source>
        <dbReference type="UniProtKB" id="A0A8U0LTF0"/>
    </source>
</evidence>
<evidence type="ECO:0000255" key="2"/>
<evidence type="ECO:0000269" key="3">
    <source>
    </source>
</evidence>
<evidence type="ECO:0000303" key="4">
    <source>
    </source>
</evidence>
<evidence type="ECO:0000303" key="5">
    <source>
    </source>
</evidence>
<evidence type="ECO:0000305" key="6">
    <source>
    </source>
</evidence>
<evidence type="ECO:0000312" key="7">
    <source>
        <dbReference type="EMBL" id="QJP03492.1"/>
    </source>
</evidence>
<organism>
    <name type="scientific">Tetramorium bicarinatum</name>
    <name type="common">Tramp ant</name>
    <dbReference type="NCBI Taxonomy" id="219812"/>
    <lineage>
        <taxon>Eukaryota</taxon>
        <taxon>Metazoa</taxon>
        <taxon>Ecdysozoa</taxon>
        <taxon>Arthropoda</taxon>
        <taxon>Hexapoda</taxon>
        <taxon>Insecta</taxon>
        <taxon>Pterygota</taxon>
        <taxon>Neoptera</taxon>
        <taxon>Endopterygota</taxon>
        <taxon>Hymenoptera</taxon>
        <taxon>Apocrita</taxon>
        <taxon>Aculeata</taxon>
        <taxon>Formicoidea</taxon>
        <taxon>Formicidae</taxon>
        <taxon>Myrmicinae</taxon>
        <taxon>Tetramorium</taxon>
    </lineage>
</organism>
<sequence>MKVLKFLFIAVIIVGLSGSLTWASPIANARAEADAEAAAEAVAKAVAEAVLPALPLLAGLMSLPFLQHKLTNG</sequence>